<name>DER_CLOK1</name>
<accession>B9E1C8</accession>
<proteinExistence type="inferred from homology"/>
<feature type="chain" id="PRO_1000124352" description="GTPase Der">
    <location>
        <begin position="1"/>
        <end position="438"/>
    </location>
</feature>
<feature type="domain" description="EngA-type G 1">
    <location>
        <begin position="4"/>
        <end position="168"/>
    </location>
</feature>
<feature type="domain" description="EngA-type G 2">
    <location>
        <begin position="177"/>
        <end position="352"/>
    </location>
</feature>
<feature type="domain" description="KH-like" evidence="1">
    <location>
        <begin position="353"/>
        <end position="437"/>
    </location>
</feature>
<feature type="binding site" evidence="1">
    <location>
        <begin position="10"/>
        <end position="17"/>
    </location>
    <ligand>
        <name>GTP</name>
        <dbReference type="ChEBI" id="CHEBI:37565"/>
        <label>1</label>
    </ligand>
</feature>
<feature type="binding site" evidence="1">
    <location>
        <begin position="57"/>
        <end position="61"/>
    </location>
    <ligand>
        <name>GTP</name>
        <dbReference type="ChEBI" id="CHEBI:37565"/>
        <label>1</label>
    </ligand>
</feature>
<feature type="binding site" evidence="1">
    <location>
        <begin position="120"/>
        <end position="123"/>
    </location>
    <ligand>
        <name>GTP</name>
        <dbReference type="ChEBI" id="CHEBI:37565"/>
        <label>1</label>
    </ligand>
</feature>
<feature type="binding site" evidence="1">
    <location>
        <begin position="183"/>
        <end position="190"/>
    </location>
    <ligand>
        <name>GTP</name>
        <dbReference type="ChEBI" id="CHEBI:37565"/>
        <label>2</label>
    </ligand>
</feature>
<feature type="binding site" evidence="1">
    <location>
        <begin position="230"/>
        <end position="234"/>
    </location>
    <ligand>
        <name>GTP</name>
        <dbReference type="ChEBI" id="CHEBI:37565"/>
        <label>2</label>
    </ligand>
</feature>
<feature type="binding site" evidence="1">
    <location>
        <begin position="295"/>
        <end position="298"/>
    </location>
    <ligand>
        <name>GTP</name>
        <dbReference type="ChEBI" id="CHEBI:37565"/>
        <label>2</label>
    </ligand>
</feature>
<gene>
    <name evidence="1" type="primary">der</name>
    <name type="synonym">engA</name>
    <name type="ordered locus">CKR_1252</name>
</gene>
<dbReference type="EMBL" id="AP009049">
    <property type="protein sequence ID" value="BAH06303.1"/>
    <property type="molecule type" value="Genomic_DNA"/>
</dbReference>
<dbReference type="RefSeq" id="WP_012101745.1">
    <property type="nucleotide sequence ID" value="NC_011837.1"/>
</dbReference>
<dbReference type="SMR" id="B9E1C8"/>
<dbReference type="KEGG" id="ckr:CKR_1252"/>
<dbReference type="HOGENOM" id="CLU_016077_6_2_9"/>
<dbReference type="Proteomes" id="UP000007969">
    <property type="component" value="Chromosome"/>
</dbReference>
<dbReference type="GO" id="GO:0005525">
    <property type="term" value="F:GTP binding"/>
    <property type="evidence" value="ECO:0007669"/>
    <property type="project" value="UniProtKB-UniRule"/>
</dbReference>
<dbReference type="GO" id="GO:0043022">
    <property type="term" value="F:ribosome binding"/>
    <property type="evidence" value="ECO:0007669"/>
    <property type="project" value="TreeGrafter"/>
</dbReference>
<dbReference type="GO" id="GO:0042254">
    <property type="term" value="P:ribosome biogenesis"/>
    <property type="evidence" value="ECO:0007669"/>
    <property type="project" value="UniProtKB-KW"/>
</dbReference>
<dbReference type="CDD" id="cd01894">
    <property type="entry name" value="EngA1"/>
    <property type="match status" value="1"/>
</dbReference>
<dbReference type="CDD" id="cd01895">
    <property type="entry name" value="EngA2"/>
    <property type="match status" value="1"/>
</dbReference>
<dbReference type="FunFam" id="3.30.300.20:FF:000004">
    <property type="entry name" value="GTPase Der"/>
    <property type="match status" value="1"/>
</dbReference>
<dbReference type="FunFam" id="3.40.50.300:FF:000040">
    <property type="entry name" value="GTPase Der"/>
    <property type="match status" value="1"/>
</dbReference>
<dbReference type="FunFam" id="3.40.50.300:FF:000057">
    <property type="entry name" value="GTPase Der"/>
    <property type="match status" value="1"/>
</dbReference>
<dbReference type="Gene3D" id="3.30.300.20">
    <property type="match status" value="1"/>
</dbReference>
<dbReference type="Gene3D" id="3.40.50.300">
    <property type="entry name" value="P-loop containing nucleotide triphosphate hydrolases"/>
    <property type="match status" value="2"/>
</dbReference>
<dbReference type="HAMAP" id="MF_00195">
    <property type="entry name" value="GTPase_Der"/>
    <property type="match status" value="1"/>
</dbReference>
<dbReference type="InterPro" id="IPR031166">
    <property type="entry name" value="G_ENGA"/>
</dbReference>
<dbReference type="InterPro" id="IPR006073">
    <property type="entry name" value="GTP-bd"/>
</dbReference>
<dbReference type="InterPro" id="IPR016484">
    <property type="entry name" value="GTPase_Der"/>
</dbReference>
<dbReference type="InterPro" id="IPR032859">
    <property type="entry name" value="KH_dom-like"/>
</dbReference>
<dbReference type="InterPro" id="IPR015946">
    <property type="entry name" value="KH_dom-like_a/b"/>
</dbReference>
<dbReference type="InterPro" id="IPR027417">
    <property type="entry name" value="P-loop_NTPase"/>
</dbReference>
<dbReference type="InterPro" id="IPR005225">
    <property type="entry name" value="Small_GTP-bd"/>
</dbReference>
<dbReference type="NCBIfam" id="TIGR03594">
    <property type="entry name" value="GTPase_EngA"/>
    <property type="match status" value="1"/>
</dbReference>
<dbReference type="NCBIfam" id="TIGR00231">
    <property type="entry name" value="small_GTP"/>
    <property type="match status" value="2"/>
</dbReference>
<dbReference type="PANTHER" id="PTHR43834">
    <property type="entry name" value="GTPASE DER"/>
    <property type="match status" value="1"/>
</dbReference>
<dbReference type="PANTHER" id="PTHR43834:SF6">
    <property type="entry name" value="GTPASE DER"/>
    <property type="match status" value="1"/>
</dbReference>
<dbReference type="Pfam" id="PF14714">
    <property type="entry name" value="KH_dom-like"/>
    <property type="match status" value="1"/>
</dbReference>
<dbReference type="Pfam" id="PF01926">
    <property type="entry name" value="MMR_HSR1"/>
    <property type="match status" value="2"/>
</dbReference>
<dbReference type="PIRSF" id="PIRSF006485">
    <property type="entry name" value="GTP-binding_EngA"/>
    <property type="match status" value="1"/>
</dbReference>
<dbReference type="PRINTS" id="PR00326">
    <property type="entry name" value="GTP1OBG"/>
</dbReference>
<dbReference type="SUPFAM" id="SSF52540">
    <property type="entry name" value="P-loop containing nucleoside triphosphate hydrolases"/>
    <property type="match status" value="2"/>
</dbReference>
<dbReference type="PROSITE" id="PS51712">
    <property type="entry name" value="G_ENGA"/>
    <property type="match status" value="2"/>
</dbReference>
<organism>
    <name type="scientific">Clostridium kluyveri (strain NBRC 12016)</name>
    <dbReference type="NCBI Taxonomy" id="583346"/>
    <lineage>
        <taxon>Bacteria</taxon>
        <taxon>Bacillati</taxon>
        <taxon>Bacillota</taxon>
        <taxon>Clostridia</taxon>
        <taxon>Eubacteriales</taxon>
        <taxon>Clostridiaceae</taxon>
        <taxon>Clostridium</taxon>
    </lineage>
</organism>
<sequence length="438" mass="49663">MGKPIVAIVGRPNVGKSTLFNKLAGKRISIVEDTPGVTRDRVYAQAEWLNYNFTIIDTGGIEPENNDVIISKMRRQAQVAIETANVIIFIVDGREGLTAADKEVAQMLRKSKKPIVLVVNKIDNMKQENYIYEFYNLGIGEPISISASQGLGLGDMLDKLVENFKNEGNEDEDSEYIKIAFIGKPNVGKSSLINKLLGEERVIVSDIPGTTRDAIDSYLETDEGKFLLIDTAGVRRKSKVKEEIEKYSVIRTYTAVERADVCILMLDATHDISEQDEKIIGYAHELNKAIMVVINKWDLVDKDTKTVNKYKTSIGSSLSFMSYAPYLFISAKTGQRVNRIFKMVRECYDNYCKQIKTGILNDIIGKIVMMKEPPVVGNKRLKIYYVTQIGTKPPTFVFFVNDSKCIHFSYRRYIENQLRDSFDFTGTGIKLEFRERKE</sequence>
<protein>
    <recommendedName>
        <fullName evidence="1">GTPase Der</fullName>
    </recommendedName>
    <alternativeName>
        <fullName evidence="1">GTP-binding protein EngA</fullName>
    </alternativeName>
</protein>
<keyword id="KW-0342">GTP-binding</keyword>
<keyword id="KW-0547">Nucleotide-binding</keyword>
<keyword id="KW-0677">Repeat</keyword>
<keyword id="KW-0690">Ribosome biogenesis</keyword>
<evidence type="ECO:0000255" key="1">
    <source>
        <dbReference type="HAMAP-Rule" id="MF_00195"/>
    </source>
</evidence>
<comment type="function">
    <text evidence="1">GTPase that plays an essential role in the late steps of ribosome biogenesis.</text>
</comment>
<comment type="subunit">
    <text evidence="1">Associates with the 50S ribosomal subunit.</text>
</comment>
<comment type="similarity">
    <text evidence="1">Belongs to the TRAFAC class TrmE-Era-EngA-EngB-Septin-like GTPase superfamily. EngA (Der) GTPase family.</text>
</comment>
<reference key="1">
    <citation type="submission" date="2005-09" db="EMBL/GenBank/DDBJ databases">
        <title>Complete genome sequence of Clostridium kluyveri and comparative genomics of Clostridia species.</title>
        <authorList>
            <person name="Inui M."/>
            <person name="Nonaka H."/>
            <person name="Shinoda Y."/>
            <person name="Ikenaga Y."/>
            <person name="Abe M."/>
            <person name="Naito K."/>
            <person name="Vertes A.A."/>
            <person name="Yukawa H."/>
        </authorList>
    </citation>
    <scope>NUCLEOTIDE SEQUENCE [LARGE SCALE GENOMIC DNA]</scope>
    <source>
        <strain>NBRC 12016</strain>
    </source>
</reference>